<feature type="chain" id="PRO_0000092454" description="Lipoprotein-releasing system ATP-binding protein LolD 1">
    <location>
        <begin position="1"/>
        <end position="229"/>
    </location>
</feature>
<feature type="domain" description="ABC transporter" evidence="1">
    <location>
        <begin position="2"/>
        <end position="229"/>
    </location>
</feature>
<feature type="binding site" evidence="1">
    <location>
        <begin position="38"/>
        <end position="45"/>
    </location>
    <ligand>
        <name>ATP</name>
        <dbReference type="ChEBI" id="CHEBI:30616"/>
    </ligand>
</feature>
<proteinExistence type="inferred from homology"/>
<dbReference type="EC" id="7.6.2.-" evidence="1"/>
<dbReference type="EMBL" id="BX294135">
    <property type="protein sequence ID" value="CAD72136.1"/>
    <property type="molecule type" value="Genomic_DNA"/>
</dbReference>
<dbReference type="RefSeq" id="NP_864457.1">
    <property type="nucleotide sequence ID" value="NC_005027.1"/>
</dbReference>
<dbReference type="RefSeq" id="WP_011118407.1">
    <property type="nucleotide sequence ID" value="NC_005027.1"/>
</dbReference>
<dbReference type="SMR" id="Q7UX73"/>
<dbReference type="FunCoup" id="Q7UX73">
    <property type="interactions" value="303"/>
</dbReference>
<dbReference type="STRING" id="243090.RB1517"/>
<dbReference type="EnsemblBacteria" id="CAD72136">
    <property type="protein sequence ID" value="CAD72136"/>
    <property type="gene ID" value="RB1517"/>
</dbReference>
<dbReference type="KEGG" id="rba:RB1517"/>
<dbReference type="PATRIC" id="fig|243090.15.peg.709"/>
<dbReference type="eggNOG" id="COG1136">
    <property type="taxonomic scope" value="Bacteria"/>
</dbReference>
<dbReference type="HOGENOM" id="CLU_000604_1_22_0"/>
<dbReference type="InParanoid" id="Q7UX73"/>
<dbReference type="OrthoDB" id="273392at2"/>
<dbReference type="Proteomes" id="UP000001025">
    <property type="component" value="Chromosome"/>
</dbReference>
<dbReference type="GO" id="GO:0005886">
    <property type="term" value="C:plasma membrane"/>
    <property type="evidence" value="ECO:0000318"/>
    <property type="project" value="GO_Central"/>
</dbReference>
<dbReference type="GO" id="GO:0005524">
    <property type="term" value="F:ATP binding"/>
    <property type="evidence" value="ECO:0007669"/>
    <property type="project" value="UniProtKB-KW"/>
</dbReference>
<dbReference type="GO" id="GO:0016887">
    <property type="term" value="F:ATP hydrolysis activity"/>
    <property type="evidence" value="ECO:0007669"/>
    <property type="project" value="InterPro"/>
</dbReference>
<dbReference type="GO" id="GO:0022857">
    <property type="term" value="F:transmembrane transporter activity"/>
    <property type="evidence" value="ECO:0000318"/>
    <property type="project" value="GO_Central"/>
</dbReference>
<dbReference type="GO" id="GO:0055085">
    <property type="term" value="P:transmembrane transport"/>
    <property type="evidence" value="ECO:0000318"/>
    <property type="project" value="GO_Central"/>
</dbReference>
<dbReference type="CDD" id="cd03255">
    <property type="entry name" value="ABC_MJ0796_LolCDE_FtsE"/>
    <property type="match status" value="1"/>
</dbReference>
<dbReference type="FunFam" id="3.40.50.300:FF:000032">
    <property type="entry name" value="Export ABC transporter ATP-binding protein"/>
    <property type="match status" value="1"/>
</dbReference>
<dbReference type="Gene3D" id="3.40.50.300">
    <property type="entry name" value="P-loop containing nucleotide triphosphate hydrolases"/>
    <property type="match status" value="1"/>
</dbReference>
<dbReference type="InterPro" id="IPR003593">
    <property type="entry name" value="AAA+_ATPase"/>
</dbReference>
<dbReference type="InterPro" id="IPR003439">
    <property type="entry name" value="ABC_transporter-like_ATP-bd"/>
</dbReference>
<dbReference type="InterPro" id="IPR015854">
    <property type="entry name" value="ABC_transpr_LolD-like"/>
</dbReference>
<dbReference type="InterPro" id="IPR017911">
    <property type="entry name" value="MacB-like_ATP-bd"/>
</dbReference>
<dbReference type="InterPro" id="IPR027417">
    <property type="entry name" value="P-loop_NTPase"/>
</dbReference>
<dbReference type="PANTHER" id="PTHR24220">
    <property type="entry name" value="IMPORT ATP-BINDING PROTEIN"/>
    <property type="match status" value="1"/>
</dbReference>
<dbReference type="PANTHER" id="PTHR24220:SF689">
    <property type="entry name" value="LIPOPROTEIN-RELEASING SYSTEM ATP-BINDING PROTEIN LOLD"/>
    <property type="match status" value="1"/>
</dbReference>
<dbReference type="Pfam" id="PF00005">
    <property type="entry name" value="ABC_tran"/>
    <property type="match status" value="1"/>
</dbReference>
<dbReference type="SMART" id="SM00382">
    <property type="entry name" value="AAA"/>
    <property type="match status" value="1"/>
</dbReference>
<dbReference type="SUPFAM" id="SSF52540">
    <property type="entry name" value="P-loop containing nucleoside triphosphate hydrolases"/>
    <property type="match status" value="1"/>
</dbReference>
<dbReference type="PROSITE" id="PS50893">
    <property type="entry name" value="ABC_TRANSPORTER_2"/>
    <property type="match status" value="1"/>
</dbReference>
<dbReference type="PROSITE" id="PS51244">
    <property type="entry name" value="LOLD"/>
    <property type="match status" value="1"/>
</dbReference>
<keyword id="KW-0067">ATP-binding</keyword>
<keyword id="KW-0997">Cell inner membrane</keyword>
<keyword id="KW-1003">Cell membrane</keyword>
<keyword id="KW-0472">Membrane</keyword>
<keyword id="KW-0547">Nucleotide-binding</keyword>
<keyword id="KW-1185">Reference proteome</keyword>
<keyword id="KW-1278">Translocase</keyword>
<keyword id="KW-0813">Transport</keyword>
<reference key="1">
    <citation type="journal article" date="2003" name="Proc. Natl. Acad. Sci. U.S.A.">
        <title>Complete genome sequence of the marine planctomycete Pirellula sp. strain 1.</title>
        <authorList>
            <person name="Gloeckner F.O."/>
            <person name="Kube M."/>
            <person name="Bauer M."/>
            <person name="Teeling H."/>
            <person name="Lombardot T."/>
            <person name="Ludwig W."/>
            <person name="Gade D."/>
            <person name="Beck A."/>
            <person name="Borzym K."/>
            <person name="Heitmann K."/>
            <person name="Rabus R."/>
            <person name="Schlesner H."/>
            <person name="Amann R."/>
            <person name="Reinhardt R."/>
        </authorList>
    </citation>
    <scope>NUCLEOTIDE SEQUENCE [LARGE SCALE GENOMIC DNA]</scope>
    <source>
        <strain>DSM 10527 / NCIMB 13988 / SH1</strain>
    </source>
</reference>
<protein>
    <recommendedName>
        <fullName evidence="1">Lipoprotein-releasing system ATP-binding protein LolD 1</fullName>
        <ecNumber evidence="1">7.6.2.-</ecNumber>
    </recommendedName>
</protein>
<evidence type="ECO:0000255" key="1">
    <source>
        <dbReference type="HAMAP-Rule" id="MF_01708"/>
    </source>
</evidence>
<sequence>MLVVSELSKSYPTAGEPLSVLRGVNLELSPGQSAAIVGPSGSGKTTLLQILGTLDEPDSGSVQINGQDPFALDARERAAYRNQTIGFIFQDHHLLPQLSVTENVLIPALANGKPTSDDVSRAAELIDAVGLSHRATHLPRELSGGERERVAIARALLMQPSVVLADEPTGNLDSKTAKTITELLLRLQAEQNTVLVTVTHSLSLADEMNERFELVDGALVRRGRFGITA</sequence>
<organism>
    <name type="scientific">Rhodopirellula baltica (strain DSM 10527 / NCIMB 13988 / SH1)</name>
    <dbReference type="NCBI Taxonomy" id="243090"/>
    <lineage>
        <taxon>Bacteria</taxon>
        <taxon>Pseudomonadati</taxon>
        <taxon>Planctomycetota</taxon>
        <taxon>Planctomycetia</taxon>
        <taxon>Pirellulales</taxon>
        <taxon>Pirellulaceae</taxon>
        <taxon>Rhodopirellula</taxon>
    </lineage>
</organism>
<name>LOLD1_RHOBA</name>
<comment type="function">
    <text evidence="1">Part of the ABC transporter complex LolCDE involved in the translocation of mature outer membrane-directed lipoproteins, from the inner membrane to the periplasmic chaperone, LolA. Responsible for the formation of the LolA-lipoprotein complex in an ATP-dependent manner.</text>
</comment>
<comment type="subunit">
    <text evidence="1">The complex is composed of two ATP-binding proteins (LolD) and two transmembrane proteins (LolC and LolE).</text>
</comment>
<comment type="subcellular location">
    <subcellularLocation>
        <location evidence="1">Cell inner membrane</location>
        <topology evidence="1">Peripheral membrane protein</topology>
    </subcellularLocation>
</comment>
<comment type="similarity">
    <text evidence="1">Belongs to the ABC transporter superfamily. Lipoprotein translocase (TC 3.A.1.125) family.</text>
</comment>
<accession>Q7UX73</accession>
<gene>
    <name evidence="1" type="primary">lolD1</name>
    <name type="ordered locus">RB1517</name>
</gene>